<feature type="chain" id="PRO_0000179988" description="Transforming acidic coiled-coil-containing protein 2">
    <location>
        <begin position="1"/>
        <end position="2948"/>
    </location>
</feature>
<feature type="domain" description="SPAZ">
    <location>
        <begin position="2315"/>
        <end position="2403"/>
    </location>
</feature>
<feature type="region of interest" description="Disordered" evidence="4">
    <location>
        <begin position="1"/>
        <end position="304"/>
    </location>
</feature>
<feature type="region of interest" description="Disordered" evidence="4">
    <location>
        <begin position="314"/>
        <end position="333"/>
    </location>
</feature>
<feature type="region of interest" description="Disordered" evidence="4">
    <location>
        <begin position="392"/>
        <end position="453"/>
    </location>
</feature>
<feature type="region of interest" description="Disordered" evidence="4">
    <location>
        <begin position="465"/>
        <end position="785"/>
    </location>
</feature>
<feature type="region of interest" description="Disordered" evidence="4">
    <location>
        <begin position="825"/>
        <end position="964"/>
    </location>
</feature>
<feature type="region of interest" description="Disordered" evidence="4">
    <location>
        <begin position="985"/>
        <end position="1050"/>
    </location>
</feature>
<feature type="region of interest" description="Disordered" evidence="4">
    <location>
        <begin position="1062"/>
        <end position="1154"/>
    </location>
</feature>
<feature type="region of interest" description="Disordered" evidence="4">
    <location>
        <begin position="1243"/>
        <end position="1274"/>
    </location>
</feature>
<feature type="region of interest" description="Disordered" evidence="4">
    <location>
        <begin position="1296"/>
        <end position="1400"/>
    </location>
</feature>
<feature type="region of interest" description="Disordered" evidence="4">
    <location>
        <begin position="1427"/>
        <end position="1463"/>
    </location>
</feature>
<feature type="region of interest" description="Disordered" evidence="4">
    <location>
        <begin position="1493"/>
        <end position="1661"/>
    </location>
</feature>
<feature type="region of interest" description="Disordered" evidence="4">
    <location>
        <begin position="1675"/>
        <end position="1705"/>
    </location>
</feature>
<feature type="region of interest" description="Disordered" evidence="4">
    <location>
        <begin position="1741"/>
        <end position="1878"/>
    </location>
</feature>
<feature type="region of interest" description="Disordered" evidence="4">
    <location>
        <begin position="1907"/>
        <end position="2035"/>
    </location>
</feature>
<feature type="region of interest" description="Disordered" evidence="4">
    <location>
        <begin position="2052"/>
        <end position="2460"/>
    </location>
</feature>
<feature type="region of interest" description="Disordered" evidence="4">
    <location>
        <begin position="2555"/>
        <end position="2577"/>
    </location>
</feature>
<feature type="coiled-coil region" evidence="3">
    <location>
        <begin position="2675"/>
        <end position="2703"/>
    </location>
</feature>
<feature type="coiled-coil region" evidence="3">
    <location>
        <begin position="2746"/>
        <end position="2947"/>
    </location>
</feature>
<feature type="compositionally biased region" description="Polar residues" evidence="4">
    <location>
        <begin position="1"/>
        <end position="30"/>
    </location>
</feature>
<feature type="compositionally biased region" description="Basic and acidic residues" evidence="4">
    <location>
        <begin position="174"/>
        <end position="184"/>
    </location>
</feature>
<feature type="compositionally biased region" description="Basic and acidic residues" evidence="4">
    <location>
        <begin position="496"/>
        <end position="507"/>
    </location>
</feature>
<feature type="compositionally biased region" description="Basic and acidic residues" evidence="4">
    <location>
        <begin position="604"/>
        <end position="629"/>
    </location>
</feature>
<feature type="compositionally biased region" description="Low complexity" evidence="4">
    <location>
        <begin position="911"/>
        <end position="926"/>
    </location>
</feature>
<feature type="compositionally biased region" description="Polar residues" evidence="4">
    <location>
        <begin position="985"/>
        <end position="996"/>
    </location>
</feature>
<feature type="compositionally biased region" description="Low complexity" evidence="4">
    <location>
        <begin position="1348"/>
        <end position="1357"/>
    </location>
</feature>
<feature type="compositionally biased region" description="Polar residues" evidence="4">
    <location>
        <begin position="1383"/>
        <end position="1400"/>
    </location>
</feature>
<feature type="compositionally biased region" description="Basic and acidic residues" evidence="4">
    <location>
        <begin position="1801"/>
        <end position="1823"/>
    </location>
</feature>
<feature type="compositionally biased region" description="Basic and acidic residues" evidence="4">
    <location>
        <begin position="1834"/>
        <end position="1854"/>
    </location>
</feature>
<feature type="compositionally biased region" description="Low complexity" evidence="4">
    <location>
        <begin position="1862"/>
        <end position="1873"/>
    </location>
</feature>
<feature type="compositionally biased region" description="Basic and acidic residues" evidence="4">
    <location>
        <begin position="1939"/>
        <end position="1948"/>
    </location>
</feature>
<feature type="compositionally biased region" description="Pro residues" evidence="4">
    <location>
        <begin position="1963"/>
        <end position="1976"/>
    </location>
</feature>
<feature type="compositionally biased region" description="Polar residues" evidence="4">
    <location>
        <begin position="2074"/>
        <end position="2102"/>
    </location>
</feature>
<feature type="compositionally biased region" description="Low complexity" evidence="4">
    <location>
        <begin position="2114"/>
        <end position="2124"/>
    </location>
</feature>
<feature type="compositionally biased region" description="Basic residues" evidence="4">
    <location>
        <begin position="2125"/>
        <end position="2141"/>
    </location>
</feature>
<feature type="compositionally biased region" description="Basic and acidic residues" evidence="4">
    <location>
        <begin position="2265"/>
        <end position="2275"/>
    </location>
</feature>
<feature type="compositionally biased region" description="Basic residues" evidence="4">
    <location>
        <begin position="2288"/>
        <end position="2305"/>
    </location>
</feature>
<feature type="compositionally biased region" description="Polar residues" evidence="4">
    <location>
        <begin position="2348"/>
        <end position="2368"/>
    </location>
</feature>
<feature type="compositionally biased region" description="Low complexity" evidence="4">
    <location>
        <begin position="2382"/>
        <end position="2395"/>
    </location>
</feature>
<feature type="compositionally biased region" description="Polar residues" evidence="4">
    <location>
        <begin position="2568"/>
        <end position="2577"/>
    </location>
</feature>
<feature type="modified residue" description="Phosphoserine" evidence="21 22">
    <location>
        <position position="197"/>
    </location>
</feature>
<feature type="modified residue" description="Phosphoserine" evidence="21 22">
    <location>
        <position position="201"/>
    </location>
</feature>
<feature type="modified residue" description="Phosphoserine" evidence="22">
    <location>
        <position position="269"/>
    </location>
</feature>
<feature type="modified residue" description="Phosphoserine" evidence="22">
    <location>
        <position position="493"/>
    </location>
</feature>
<feature type="modified residue" description="Phosphoserine" evidence="22">
    <location>
        <position position="561"/>
    </location>
</feature>
<feature type="modified residue" description="Phosphoserine" evidence="21">
    <location>
        <position position="571"/>
    </location>
</feature>
<feature type="modified residue" description="Phosphoserine" evidence="21">
    <location>
        <position position="575"/>
    </location>
</feature>
<feature type="modified residue" description="Phosphoserine" evidence="21">
    <location>
        <position position="758"/>
    </location>
</feature>
<feature type="modified residue" description="Phosphoserine" evidence="21">
    <location>
        <position position="962"/>
    </location>
</feature>
<feature type="modified residue" description="Phosphoserine" evidence="21">
    <location>
        <position position="1025"/>
    </location>
</feature>
<feature type="modified residue" description="Phosphoserine" evidence="21">
    <location>
        <position position="1267"/>
    </location>
</feature>
<feature type="modified residue" description="Phosphoserine" evidence="21">
    <location>
        <position position="1313"/>
    </location>
</feature>
<feature type="modified residue" description="Phosphoserine" evidence="21">
    <location>
        <position position="1562"/>
    </location>
</feature>
<feature type="modified residue" description="Phosphoserine" evidence="21 23 25">
    <location>
        <position position="2072"/>
    </location>
</feature>
<feature type="modified residue" description="Phosphoserine" evidence="2">
    <location>
        <position position="2161"/>
    </location>
</feature>
<feature type="modified residue" description="Phosphoserine" evidence="22 25">
    <location>
        <position position="2226"/>
    </location>
</feature>
<feature type="modified residue" description="Phosphothreonine" evidence="21 22">
    <location>
        <position position="2246"/>
    </location>
</feature>
<feature type="modified residue" description="Phosphoserine" evidence="19 21 22 23 24">
    <location>
        <position position="2256"/>
    </location>
</feature>
<feature type="modified residue" description="Phosphoserine" evidence="20 21 22 23 24 25">
    <location>
        <position position="2317"/>
    </location>
</feature>
<feature type="modified residue" description="Phosphoserine" evidence="20 21 22 23">
    <location>
        <position position="2321"/>
    </location>
</feature>
<feature type="modified residue" description="Phosphoserine" evidence="21">
    <location>
        <position position="2359"/>
    </location>
</feature>
<feature type="modified residue" description="Phosphoserine" evidence="21">
    <location>
        <position position="2389"/>
    </location>
</feature>
<feature type="modified residue" description="Phosphoserine" evidence="2">
    <location>
        <position position="2392"/>
    </location>
</feature>
<feature type="modified residue" description="Phosphoserine" evidence="21">
    <location>
        <position position="2394"/>
    </location>
</feature>
<feature type="modified residue" description="Phosphoserine" evidence="21">
    <location>
        <position position="2403"/>
    </location>
</feature>
<feature type="modified residue" description="Phosphothreonine" evidence="24">
    <location>
        <position position="2430"/>
    </location>
</feature>
<feature type="modified residue" description="Phosphothreonine" evidence="22">
    <location>
        <position position="2451"/>
    </location>
</feature>
<feature type="modified residue" description="Phosphothreonine" evidence="22">
    <location>
        <position position="2455"/>
    </location>
</feature>
<feature type="modified residue" description="Phosphothreonine" evidence="22">
    <location>
        <position position="2458"/>
    </location>
</feature>
<feature type="modified residue" description="Phosphoserine" evidence="19 21 22 24">
    <location>
        <position position="2512"/>
    </location>
</feature>
<feature type="modified residue" description="Phosphoserine" evidence="24">
    <location>
        <position position="2534"/>
    </location>
</feature>
<feature type="modified residue" description="Phosphothreonine" evidence="2">
    <location>
        <position position="2553"/>
    </location>
</feature>
<feature type="modified residue" description="Phosphoserine" evidence="22">
    <location>
        <position position="2557"/>
    </location>
</feature>
<feature type="modified residue" description="Phosphoserine" evidence="24">
    <location>
        <position position="2569"/>
    </location>
</feature>
<feature type="splice variant" id="VSP_022151" description="In isoform 2." evidence="12">
    <location>
        <begin position="1"/>
        <end position="2296"/>
    </location>
</feature>
<feature type="splice variant" id="VSP_022153" description="In isoform 1 and isoform 6." evidence="13 16">
    <location>
        <begin position="1"/>
        <end position="1922"/>
    </location>
</feature>
<feature type="splice variant" id="VSP_022154" description="In isoform 5." evidence="15">
    <location>
        <begin position="49"/>
        <end position="1857"/>
    </location>
</feature>
<feature type="splice variant" id="VSP_022155" description="In isoform 5." evidence="15">
    <location>
        <begin position="1900"/>
        <end position="1944"/>
    </location>
</feature>
<feature type="splice variant" id="VSP_022156" description="In isoform 1 and isoform 6." evidence="13 16">
    <original>APAGDRVEASTPSCPDPAKDLSR</original>
    <variation>MGGSQSLQPAPASDLNLEASEAM</variation>
    <location>
        <begin position="1923"/>
        <end position="1945"/>
    </location>
</feature>
<feature type="splice variant" id="VSP_006368" description="In isoform 2." evidence="12">
    <location>
        <begin position="2429"/>
        <end position="2432"/>
    </location>
</feature>
<feature type="splice variant" id="VSP_006369" description="In isoform 2 and isoform 3." evidence="12 14 17">
    <location>
        <begin position="2633"/>
        <end position="2709"/>
    </location>
</feature>
<feature type="splice variant" id="VSP_022158" description="In isoform 6." evidence="16">
    <location>
        <begin position="2680"/>
        <end position="2709"/>
    </location>
</feature>
<feature type="sequence variant" id="VAR_053706" description="In dbSNP:rs11200385.">
    <original>V</original>
    <variation>I</variation>
    <location>
        <position position="170"/>
    </location>
</feature>
<feature type="sequence variant" id="VAR_036381" description="In a breast cancer sample; somatic mutation." evidence="10">
    <original>L</original>
    <variation>V</variation>
    <location>
        <position position="798"/>
    </location>
</feature>
<feature type="sequence variant" id="VAR_053707" description="In dbSNP:rs10887063." evidence="7">
    <original>L</original>
    <variation>F</variation>
    <location>
        <position position="830"/>
    </location>
</feature>
<feature type="sequence variant" id="VAR_053708" description="In dbSNP:rs7073433." evidence="7">
    <original>W</original>
    <variation>R</variation>
    <location>
        <position position="1103"/>
    </location>
</feature>
<feature type="sequence variant" id="VAR_036382" description="In a breast cancer sample; somatic mutation." evidence="10">
    <original>A</original>
    <variation>S</variation>
    <location>
        <position position="1347"/>
    </location>
</feature>
<feature type="sequence variant" id="VAR_053709" description="In dbSNP:rs4752642.">
    <original>A</original>
    <variation>T</variation>
    <location>
        <position position="1425"/>
    </location>
</feature>
<feature type="sequence variant" id="VAR_053710" description="In dbSNP:rs7920896.">
    <original>P</original>
    <variation>L</variation>
    <location>
        <position position="1492"/>
    </location>
</feature>
<feature type="sequence variant" id="VAR_053711" description="In dbSNP:rs12765679.">
    <original>E</original>
    <variation>K</variation>
    <location>
        <position position="1916"/>
    </location>
</feature>
<feature type="sequence variant" id="VAR_029803" description="In dbSNP:rs7083331.">
    <original>I</original>
    <variation>T</variation>
    <location>
        <position position="2078"/>
    </location>
</feature>
<feature type="sequence variant" id="VAR_020478" description="In dbSNP:rs3750843.">
    <original>N</original>
    <variation>S</variation>
    <location>
        <position position="2102"/>
    </location>
</feature>
<feature type="sequence variant" id="VAR_020479" description="In dbSNP:rs2295873.">
    <original>V</original>
    <variation>A</variation>
    <location>
        <position position="2197"/>
    </location>
</feature>
<feature type="sequence variant" id="VAR_029804" description="In dbSNP:rs2295874.">
    <original>A</original>
    <variation>V</variation>
    <location>
        <position position="2210"/>
    </location>
</feature>
<feature type="sequence variant" id="VAR_053712" description="In dbSNP:rs2295875.">
    <original>P</original>
    <variation>L</variation>
    <location>
        <position position="2216"/>
    </location>
</feature>
<feature type="sequence variant" id="VAR_020480" description="In dbSNP:rs2295876.">
    <original>L</original>
    <variation>H</variation>
    <location>
        <position position="2261"/>
    </location>
</feature>
<feature type="sequence variant" id="VAR_053713" description="In dbSNP:rs11200483.">
    <original>E</original>
    <variation>D</variation>
    <location>
        <position position="2271"/>
    </location>
</feature>
<feature type="sequence variant" id="VAR_020481" description="In dbSNP:rs2295878.">
    <original>V</original>
    <variation>I</variation>
    <location>
        <position position="2718"/>
    </location>
</feature>
<feature type="sequence variant" id="VAR_020482" description="In dbSNP:rs2295879." evidence="11">
    <original>A</original>
    <variation>T</variation>
    <location>
        <position position="2732"/>
    </location>
</feature>
<feature type="sequence variant" id="VAR_029805" description="In dbSNP:rs1063627." evidence="7">
    <original>Q</original>
    <variation>K</variation>
    <location>
        <position position="2900"/>
    </location>
</feature>
<feature type="sequence conflict" description="In Ref. 3; AAO62629/AAO62630." evidence="18" ref="3">
    <original>R</original>
    <variation>Q</variation>
    <location>
        <position position="2896"/>
    </location>
</feature>
<feature type="sequence conflict" description="In Ref. 5; AAH39311." evidence="18" ref="5">
    <original>S</original>
    <variation>T</variation>
    <location>
        <position position="2909"/>
    </location>
</feature>
<feature type="modified residue" description="Phosphothreonine" evidence="21">
    <location sequence="O95359-2">
        <position position="325"/>
    </location>
</feature>
<feature type="modified residue" description="Phosphothreonine" evidence="21">
    <location sequence="O95359-3">
        <position position="2625"/>
    </location>
</feature>
<organism>
    <name type="scientific">Homo sapiens</name>
    <name type="common">Human</name>
    <dbReference type="NCBI Taxonomy" id="9606"/>
    <lineage>
        <taxon>Eukaryota</taxon>
        <taxon>Metazoa</taxon>
        <taxon>Chordata</taxon>
        <taxon>Craniata</taxon>
        <taxon>Vertebrata</taxon>
        <taxon>Euteleostomi</taxon>
        <taxon>Mammalia</taxon>
        <taxon>Eutheria</taxon>
        <taxon>Euarchontoglires</taxon>
        <taxon>Primates</taxon>
        <taxon>Haplorrhini</taxon>
        <taxon>Catarrhini</taxon>
        <taxon>Hominidae</taxon>
        <taxon>Homo</taxon>
    </lineage>
</organism>
<dbReference type="EMBL" id="AF176646">
    <property type="protein sequence ID" value="AAF63433.1"/>
    <property type="status" value="ALT_INIT"/>
    <property type="molecule type" value="mRNA"/>
</dbReference>
<dbReference type="EMBL" id="AF095791">
    <property type="protein sequence ID" value="AAC64968.2"/>
    <property type="molecule type" value="mRNA"/>
</dbReference>
<dbReference type="EMBL" id="AF528098">
    <property type="protein sequence ID" value="AAO62629.1"/>
    <property type="molecule type" value="mRNA"/>
</dbReference>
<dbReference type="EMBL" id="AF528099">
    <property type="protein sequence ID" value="AAO62630.1"/>
    <property type="molecule type" value="mRNA"/>
</dbReference>
<dbReference type="EMBL" id="AC063960">
    <property type="status" value="NOT_ANNOTATED_CDS"/>
    <property type="molecule type" value="Genomic_DNA"/>
</dbReference>
<dbReference type="EMBL" id="AL135793">
    <property type="status" value="NOT_ANNOTATED_CDS"/>
    <property type="molecule type" value="Genomic_DNA"/>
</dbReference>
<dbReference type="EMBL" id="BC000999">
    <property type="protein sequence ID" value="AAH00999.1"/>
    <property type="molecule type" value="mRNA"/>
</dbReference>
<dbReference type="EMBL" id="BC039311">
    <property type="protein sequence ID" value="AAH39311.1"/>
    <property type="molecule type" value="mRNA"/>
</dbReference>
<dbReference type="EMBL" id="AF220152">
    <property type="protein sequence ID" value="AAF29537.2"/>
    <property type="status" value="ALT_SEQ"/>
    <property type="molecule type" value="mRNA"/>
</dbReference>
<dbReference type="EMBL" id="AL713712">
    <property type="protein sequence ID" value="CAD28509.1"/>
    <property type="molecule type" value="mRNA"/>
</dbReference>
<dbReference type="CCDS" id="CCDS7625.1">
    <molecule id="O95359-5"/>
</dbReference>
<dbReference type="CCDS" id="CCDS7626.1">
    <molecule id="O95359-4"/>
</dbReference>
<dbReference type="CCDS" id="CCDS7627.1">
    <molecule id="O95359-1"/>
</dbReference>
<dbReference type="CCDS" id="CCDS7628.1">
    <molecule id="O95359-6"/>
</dbReference>
<dbReference type="RefSeq" id="NP_001278807.1">
    <property type="nucleotide sequence ID" value="NM_001291878.1"/>
</dbReference>
<dbReference type="RefSeq" id="NP_008928.1">
    <molecule id="O95359-1"/>
    <property type="nucleotide sequence ID" value="NM_006997.4"/>
</dbReference>
<dbReference type="RefSeq" id="NP_996742.1">
    <molecule id="O95359-6"/>
    <property type="nucleotide sequence ID" value="NM_206860.3"/>
</dbReference>
<dbReference type="RefSeq" id="NP_996743.1">
    <molecule id="O95359-5"/>
    <property type="nucleotide sequence ID" value="NM_206861.3"/>
</dbReference>
<dbReference type="RefSeq" id="NP_996744.4">
    <molecule id="O95359-4"/>
    <property type="nucleotide sequence ID" value="NM_206862.4"/>
</dbReference>
<dbReference type="RefSeq" id="XP_047280412.1">
    <molecule id="O95359-3"/>
    <property type="nucleotide sequence ID" value="XM_047424456.1"/>
</dbReference>
<dbReference type="BioGRID" id="115830">
    <property type="interactions" value="82"/>
</dbReference>
<dbReference type="CORUM" id="O95359"/>
<dbReference type="FunCoup" id="O95359">
    <property type="interactions" value="725"/>
</dbReference>
<dbReference type="IntAct" id="O95359">
    <property type="interactions" value="18"/>
</dbReference>
<dbReference type="MINT" id="O95359"/>
<dbReference type="STRING" id="9606.ENSP00000358001"/>
<dbReference type="CarbonylDB" id="O95359"/>
<dbReference type="GlyGen" id="O95359">
    <property type="glycosylation" value="7 sites, 1 N-linked glycan (1 site), 1 O-linked glycan (1 site)"/>
</dbReference>
<dbReference type="iPTMnet" id="O95359"/>
<dbReference type="PhosphoSitePlus" id="O95359"/>
<dbReference type="SwissPalm" id="O95359"/>
<dbReference type="BioMuta" id="TACC2"/>
<dbReference type="CPTAC" id="CPTAC-1011"/>
<dbReference type="jPOST" id="O95359"/>
<dbReference type="MassIVE" id="O95359"/>
<dbReference type="PaxDb" id="9606-ENSP00000358001"/>
<dbReference type="PeptideAtlas" id="O95359"/>
<dbReference type="ProteomicsDB" id="50816">
    <molecule id="O95359-4"/>
</dbReference>
<dbReference type="ProteomicsDB" id="50817">
    <molecule id="O95359-1"/>
</dbReference>
<dbReference type="ProteomicsDB" id="50818">
    <molecule id="O95359-2"/>
</dbReference>
<dbReference type="ProteomicsDB" id="50819">
    <molecule id="O95359-3"/>
</dbReference>
<dbReference type="ProteomicsDB" id="50820">
    <molecule id="O95359-5"/>
</dbReference>
<dbReference type="ProteomicsDB" id="50821">
    <molecule id="O95359-6"/>
</dbReference>
<dbReference type="Pumba" id="O95359"/>
<dbReference type="Antibodypedia" id="46332">
    <property type="antibodies" value="282 antibodies from 20 providers"/>
</dbReference>
<dbReference type="DNASU" id="10579"/>
<dbReference type="Ensembl" id="ENST00000260733.7">
    <molecule id="O95359-1"/>
    <property type="protein sequence ID" value="ENSP00000260733.3"/>
    <property type="gene ID" value="ENSG00000138162.19"/>
</dbReference>
<dbReference type="Ensembl" id="ENST00000334433.7">
    <molecule id="O95359-4"/>
    <property type="protein sequence ID" value="ENSP00000334280.2"/>
    <property type="gene ID" value="ENSG00000138162.19"/>
</dbReference>
<dbReference type="Ensembl" id="ENST00000358010.5">
    <molecule id="O95359-5"/>
    <property type="protein sequence ID" value="ENSP00000350701.1"/>
    <property type="gene ID" value="ENSG00000138162.19"/>
</dbReference>
<dbReference type="Ensembl" id="ENST00000360561.7">
    <molecule id="O95359-6"/>
    <property type="protein sequence ID" value="ENSP00000353763.3"/>
    <property type="gene ID" value="ENSG00000138162.19"/>
</dbReference>
<dbReference type="Ensembl" id="ENST00000369000.5">
    <molecule id="O95359-2"/>
    <property type="protein sequence ID" value="ENSP00000357996.1"/>
    <property type="gene ID" value="ENSG00000138162.19"/>
</dbReference>
<dbReference type="Ensembl" id="ENST00000369005.6">
    <molecule id="O95359-4"/>
    <property type="protein sequence ID" value="ENSP00000358001.1"/>
    <property type="gene ID" value="ENSG00000138162.19"/>
</dbReference>
<dbReference type="Ensembl" id="ENST00000513429.5">
    <molecule id="O95359-5"/>
    <property type="protein sequence ID" value="ENSP00000425062.1"/>
    <property type="gene ID" value="ENSG00000138162.19"/>
</dbReference>
<dbReference type="GeneID" id="10579"/>
<dbReference type="KEGG" id="hsa:10579"/>
<dbReference type="MANE-Select" id="ENST00000369005.6">
    <property type="protein sequence ID" value="ENSP00000358001.1"/>
    <property type="RefSeq nucleotide sequence ID" value="NM_206862.4"/>
    <property type="RefSeq protein sequence ID" value="NP_996744.4"/>
</dbReference>
<dbReference type="UCSC" id="uc001lfv.4">
    <molecule id="O95359-4"/>
    <property type="organism name" value="human"/>
</dbReference>
<dbReference type="AGR" id="HGNC:11523"/>
<dbReference type="CTD" id="10579"/>
<dbReference type="DisGeNET" id="10579"/>
<dbReference type="GeneCards" id="TACC2"/>
<dbReference type="HGNC" id="HGNC:11523">
    <property type="gene designation" value="TACC2"/>
</dbReference>
<dbReference type="HPA" id="ENSG00000138162">
    <property type="expression patterns" value="Tissue enhanced (heart muscle, skeletal muscle)"/>
</dbReference>
<dbReference type="MIM" id="605302">
    <property type="type" value="gene"/>
</dbReference>
<dbReference type="neXtProt" id="NX_O95359"/>
<dbReference type="OpenTargets" id="ENSG00000138162"/>
<dbReference type="PharmGKB" id="PA36300"/>
<dbReference type="VEuPathDB" id="HostDB:ENSG00000138162"/>
<dbReference type="eggNOG" id="ENOG502QUT1">
    <property type="taxonomic scope" value="Eukaryota"/>
</dbReference>
<dbReference type="GeneTree" id="ENSGT00940000157052"/>
<dbReference type="HOGENOM" id="CLU_000545_0_0_1"/>
<dbReference type="InParanoid" id="O95359"/>
<dbReference type="OMA" id="ECPPEAC"/>
<dbReference type="OrthoDB" id="10255048at2759"/>
<dbReference type="PAN-GO" id="O95359">
    <property type="GO annotations" value="4 GO annotations based on evolutionary models"/>
</dbReference>
<dbReference type="PhylomeDB" id="O95359"/>
<dbReference type="TreeFam" id="TF333149"/>
<dbReference type="PathwayCommons" id="O95359"/>
<dbReference type="SignaLink" id="O95359"/>
<dbReference type="BioGRID-ORCS" id="10579">
    <property type="hits" value="10 hits in 1150 CRISPR screens"/>
</dbReference>
<dbReference type="ChiTaRS" id="TACC2">
    <property type="organism name" value="human"/>
</dbReference>
<dbReference type="GeneWiki" id="TACC2"/>
<dbReference type="GenomeRNAi" id="10579"/>
<dbReference type="Pharos" id="O95359">
    <property type="development level" value="Tbio"/>
</dbReference>
<dbReference type="PRO" id="PR:O95359"/>
<dbReference type="Proteomes" id="UP000005640">
    <property type="component" value="Chromosome 10"/>
</dbReference>
<dbReference type="RNAct" id="O95359">
    <property type="molecule type" value="protein"/>
</dbReference>
<dbReference type="Bgee" id="ENSG00000138162">
    <property type="expression patterns" value="Expressed in apex of heart and 210 other cell types or tissues"/>
</dbReference>
<dbReference type="ExpressionAtlas" id="O95359">
    <property type="expression patterns" value="baseline and differential"/>
</dbReference>
<dbReference type="GO" id="GO:0005813">
    <property type="term" value="C:centrosome"/>
    <property type="evidence" value="ECO:0007669"/>
    <property type="project" value="UniProtKB-SubCell"/>
</dbReference>
<dbReference type="GO" id="GO:0005737">
    <property type="term" value="C:cytoplasm"/>
    <property type="evidence" value="ECO:0000318"/>
    <property type="project" value="GO_Central"/>
</dbReference>
<dbReference type="GO" id="GO:0005829">
    <property type="term" value="C:cytosol"/>
    <property type="evidence" value="ECO:0000314"/>
    <property type="project" value="HPA"/>
</dbReference>
<dbReference type="GO" id="GO:0005654">
    <property type="term" value="C:nucleoplasm"/>
    <property type="evidence" value="ECO:0000314"/>
    <property type="project" value="HPA"/>
</dbReference>
<dbReference type="GO" id="GO:0005886">
    <property type="term" value="C:plasma membrane"/>
    <property type="evidence" value="ECO:0000314"/>
    <property type="project" value="HPA"/>
</dbReference>
<dbReference type="GO" id="GO:0016922">
    <property type="term" value="F:nuclear receptor binding"/>
    <property type="evidence" value="ECO:0000314"/>
    <property type="project" value="MGI"/>
</dbReference>
<dbReference type="GO" id="GO:0021987">
    <property type="term" value="P:cerebral cortex development"/>
    <property type="evidence" value="ECO:0000318"/>
    <property type="project" value="GO_Central"/>
</dbReference>
<dbReference type="GO" id="GO:0000226">
    <property type="term" value="P:microtubule cytoskeleton organization"/>
    <property type="evidence" value="ECO:0000318"/>
    <property type="project" value="GO_Central"/>
</dbReference>
<dbReference type="GO" id="GO:0007052">
    <property type="term" value="P:mitotic spindle organization"/>
    <property type="evidence" value="ECO:0007669"/>
    <property type="project" value="InterPro"/>
</dbReference>
<dbReference type="GO" id="GO:0007097">
    <property type="term" value="P:nuclear migration"/>
    <property type="evidence" value="ECO:0000318"/>
    <property type="project" value="GO_Central"/>
</dbReference>
<dbReference type="FunFam" id="1.20.5.1700:FF:000001">
    <property type="entry name" value="Transforming acidic coiled-coil-containing protein 1 isoform 2"/>
    <property type="match status" value="1"/>
</dbReference>
<dbReference type="Gene3D" id="1.20.5.1700">
    <property type="match status" value="1"/>
</dbReference>
<dbReference type="InterPro" id="IPR039915">
    <property type="entry name" value="TACC"/>
</dbReference>
<dbReference type="InterPro" id="IPR007707">
    <property type="entry name" value="TACC_C"/>
</dbReference>
<dbReference type="PANTHER" id="PTHR13924">
    <property type="entry name" value="TRANSFORMING ACIDIC COILED-COIL CONTAINING PROTEIN 1/2"/>
    <property type="match status" value="1"/>
</dbReference>
<dbReference type="PANTHER" id="PTHR13924:SF11">
    <property type="entry name" value="TRANSFORMING ACIDIC COILED-COIL-CONTAINING PROTEIN 2"/>
    <property type="match status" value="1"/>
</dbReference>
<dbReference type="Pfam" id="PF05010">
    <property type="entry name" value="TACC_C"/>
    <property type="match status" value="1"/>
</dbReference>
<comment type="function">
    <text evidence="1 5">Plays a role in the microtubule-dependent coupling of the nucleus and the centrosome. Involved in the processes that regulate centrosome-mediated interkinetic nuclear migration (INM) of neural progenitors (By similarity). May play a role in organizing centrosomal microtubules. May act as a tumor suppressor protein. May represent a tumor progression marker.</text>
</comment>
<comment type="subunit">
    <text evidence="1 7 8">Interacts with CCDC100/CEP120 (By similarity). Interacts with microtubules. Interacts with YEATS4, GCN5L2 and PCAF.</text>
</comment>
<comment type="subcellular location">
    <subcellularLocation>
        <location evidence="5">Cytoplasm</location>
    </subcellularLocation>
    <subcellularLocation>
        <location evidence="5 8">Nucleus</location>
    </subcellularLocation>
    <subcellularLocation>
        <location evidence="9">Cytoplasm</location>
        <location evidence="9">Cytoskeleton</location>
        <location evidence="9">Microtubule organizing center</location>
        <location evidence="9">Centrosome</location>
    </subcellularLocation>
</comment>
<comment type="alternative products">
    <event type="alternative splicing"/>
    <isoform>
        <id>O95359-4</id>
        <name>4</name>
        <name>Long</name>
        <name>TACC2s</name>
        <sequence type="displayed"/>
    </isoform>
    <isoform>
        <id>O95359-1</id>
        <name>1</name>
        <name>Short</name>
        <sequence type="described" ref="VSP_022153 VSP_022156"/>
    </isoform>
    <isoform>
        <id>O95359-2</id>
        <name>2</name>
        <sequence type="described" ref="VSP_022151 VSP_006368 VSP_006369"/>
    </isoform>
    <isoform>
        <id>O95359-3</id>
        <name>3</name>
        <name>ECTACC</name>
        <sequence type="described" ref="VSP_006369"/>
    </isoform>
    <isoform>
        <id>O95359-5</id>
        <name>5</name>
        <name>TACC21</name>
        <sequence type="described" ref="VSP_022154 VSP_022155"/>
    </isoform>
    <isoform>
        <id>O95359-6</id>
        <name>6</name>
        <sequence type="described" ref="VSP_022153 VSP_022156 VSP_022158"/>
    </isoform>
    <text>Experimental confirmation may be lacking for some isoforms.</text>
</comment>
<comment type="tissue specificity">
    <text evidence="6 7">Strongly expressed in heart, skeletal muscle, brain, prostate, thyroid and trachea.</text>
</comment>
<comment type="developmental stage">
    <text evidence="7">Expressed in fetal brain, lung, liver and kidney.</text>
</comment>
<comment type="PTM">
    <text evidence="9">Phosphorylated by TTK; which is required for localization in centrosome.</text>
</comment>
<comment type="similarity">
    <text evidence="18">Belongs to the TACC family.</text>
</comment>
<comment type="sequence caution" evidence="18">
    <conflict type="miscellaneous discrepancy">
        <sequence resource="EMBL-CDS" id="AAF29537"/>
    </conflict>
    <text>Intron retention.</text>
</comment>
<comment type="sequence caution" evidence="18">
    <conflict type="erroneous initiation">
        <sequence resource="EMBL-CDS" id="AAF63433"/>
    </conflict>
</comment>
<accession>O95359</accession>
<accession>Q4VXL0</accession>
<accession>Q4VXL3</accession>
<accession>Q4VXL6</accession>
<accession>Q4VXL7</accession>
<accession>Q5U5T7</accession>
<accession>Q86WG6</accession>
<accession>Q86WG7</accession>
<accession>Q8TCK9</accession>
<accession>Q9BVQ1</accession>
<accession>Q9NZ41</accession>
<accession>Q9NZR5</accession>
<name>TACC2_HUMAN</name>
<sequence>MGNENSTSDNQRTLSAQTPRSAQPPGNSQNIKRKQQDTPGSPDHRDASSIGSVGLGGFCTASESSASLDPCLVSPEVTEPRKDPQGARGPEGSLLPSPPPSQEREHPSSSMPFAECPPEGCLASPAAAPEDGPQTQSPRREPAPNAPGDIAAAFPAERDSSTPYQEIAAVPSAGRERQPKEEGQKSSFSFSSGIDQSPGMSPVPLREPMKAPLCGEGDQPGGFESQEKEAAGGFPPAESRQGVASVQVTPEAPAAAQQGTESSAVLEKSPLKPMAPIPQDPAPRASDRERGQGEAPPQYLTDDLEFLRACHLPRSNSGAAPEAEVNAASQESCQQPVGAYLPHAELPWGLPSPALVPEAGGSGKEALDTIDVQGHPQTGMRGTKPNQVVCVAAGGQPEGGLPVSPEPSLLTPTEEAHPASSLASFPAAQIPIAVEEPGSSSRESVSKAGMPVSADAAKEVVDAGLVGLERQVSDLGSKGEHPEGDPGEVPAPSPQERGEHLNTEQSHEVQPGVPPPPLPKEQSHEVQPGAPPPPLPKAPSESARGPPGPTDGAKVHEDSTSPAVAKEGSRSPGDSPGGKEEAPEPPDGGDPGNLQGEDSQAFSSKRDPEVGKDELSKPSSDAESRDHPSSHSAQPPRKGGAGHTDGPHSQTAEADASGLPHKLGEEDPVLPPVPDGAGEPTVPEGAIWEGSGLQPKCPDTLQSREGLGRMESFLTLESEKSDFPPTPVAEVAPKAQEGESTLEIRKMGSCDGEGLLTSPDQPRGPACDASRQEFHAGVPHPPQGENLAADLGLTALILDQDQQGIPSCPGEGWIRGAASEWPLLSSEKHLQPSQAQPETSIFDVLKEQAQPPENGKETSPSHPGFKDQGADSSQIHVPVEPQEDNNLPTHGGQEQALGSELQSQLPKGTLSDTPTSSPTDMVWESSLTEESELSAPTRQKLPALGEKRPEGACGDGQSSRVSPPAADVLKDFSLAGNFSRKETCCTGQGPNKSQQALADALEEGSQHEEACQRHPGASEAADGCSPLWGLSKREMASGNTGEAPPCQPDSVALLDAVPCLPALAPASPGVTPTQDAPETEACDETQEGRQQPVPAPQQKMECWATSDAESPKLLASFPSAGEQGGEAGAAETGGSAGAGDPGKQQAPEKPGEATLSCGLLQTEHCLTSGEEASTSALRESCQAEHPMASCQDALLPARELGGIPRSTMDFSTHQAVPDPKELLLSGPPEVAAPDTPYLHVDSAAQRGAEDSGVKAVSSADPRAPGESPCPVGEPPLALENAASLKLFAGSLAPLLQPGAAGGEIPAVQASSGSPKARTTEGPVDSMPCLDRMPLLAKGKQATGEEKAATAPGAGAKASGEGMAGDAAGETEGSMERMGEPSQDPKQGTSGGVDTSSEQIATLTGFPDFREHIAKIFEKPVLGALATPGEKAGAGRSAVGKDLTRPLGPEKLLDGPPGVDVTLLPAPPARLQVEKKQQLAGEAEISHLALQDPASDKLLGPAGLTWERNLPGAGVGKEMAGVPPTLREDERPEGPGAAWPGLEGQAYSQLERSRQELASGLPSPAATQELPVERAAAFQVAPHSHGEEAVAQDRIPSGKQHQETSACDSPHGEDGPGDFAHTGVPGHVPRSTCAPSPQREVLTVPEANSEPWTLDTLGGERRPGVTAGILEMRNALGNQSTPAPPTGEVADTPLEPGKVAGAAGEAEGDITLSTAETQACASGDLPEAGTTRTFSVVAGDLVLPGSCQDPACSDKAPGMEGTAALHGDSPARPQQAKEQPGPERPIPAGDGKVCVSSPPEPDETHDPKLQHLAPEELHTDRESPRPGPSMLPSVPKKDAPRVMDKVTSDETRGAEGTESSPVADDIIQPAAPADLESPTLAASSYHGDVVGQVSTDLIAQSISPAAAHAGLPPSAAEHIVSPSAPAGDRVEASTPSCPDPAKDLSRSSDSEEAFETPESTTPVKAPPAPPPPPPEVIPEPEVSTQPPPEEPGCGSETVPVPDGPRSDSVEGSPFRPPSHSFSAVFDEDKPIASSGTYNLDFDNIELVDTFQTLEPRASDAKNQEGKVNTRRKSTDSVPISKSTLSRSLSLQASDFDGASSSGNPEAVALAPDAYSTGSSSASSTLKRTKKPRPPSLKKKQTTKKPTETPPVKETQQEPDEESLVPSGENLASETKTESAKTEGPSPALLEETPLEPAVGPKAACPLDSESAEGVVPPASGGGRVQNSPPVGRKTLPLTTAPEAGEVTPSDSGGQEDSPAKGLSVRLEFDYSEDKSSWDNQQENPPPTKKIGKKPVAKMPLRRPKMKKTPEKLDNTPASPPRSPAEPNDIPIAKGTYTFDIDKWDDPNFNPFSSTSKMQESPKLPQQSYNFDPDTCDESVDPFKTSSKTPSSPSKSPASFEIPASAMEANGVDGDGLNKPAKKKKTPLKTDTFRVKKSPKRSPLSDPPSQDPTPAATPETPPVISAVVHATDEEKLAVTNQKWTCMTVDLEADKQDYPQPSDLSTFVNETKFSSPTEELDYRNSYEIEYMEKIGSSLPQDDDAPKKQALYLMFDTSQESPVKSSPVRMSESPTPCSGSSFEETEALVNTAAKNQHPVPRGLAPNQESHLQVPEKSSQKELEAMGLGTPSEAIEITAPEGSFASADALLSRLAHPVSLCGALDYLEPDLAEKNPPLFAQKLQEELEFAIMRIEALKLARQIALASRSHQDAKREAAHPTDVSISKTALYSRIGTAEVEKPAGLLFQQPDLDSALQIARAEIITKEREVSEWKDKYEESRREVMEMRKIVAEYEKTIAQMIEDEQREKSVSHQTVQQLVLEKEQALADLNSVEKSLADLFRRYEKMKEVLEGFRKNEEVLKRCAQEYLSRVKKEEQRYQALKVHAEEKLDRANAEIAQVRGKAQQEQAAHQASLRKEQLRVDALERTLEQKNKEIEELTKICDELIAKMGKS</sequence>
<protein>
    <recommendedName>
        <fullName>Transforming acidic coiled-coil-containing protein 2</fullName>
    </recommendedName>
    <alternativeName>
        <fullName>Anti-Zuai-1</fullName>
        <shortName>AZU-1</shortName>
    </alternativeName>
</protein>
<evidence type="ECO:0000250" key="1"/>
<evidence type="ECO:0000250" key="2">
    <source>
        <dbReference type="UniProtKB" id="Q9JJG0"/>
    </source>
</evidence>
<evidence type="ECO:0000255" key="3"/>
<evidence type="ECO:0000256" key="4">
    <source>
        <dbReference type="SAM" id="MobiDB-lite"/>
    </source>
</evidence>
<evidence type="ECO:0000269" key="5">
    <source>
    </source>
</evidence>
<evidence type="ECO:0000269" key="6">
    <source>
    </source>
</evidence>
<evidence type="ECO:0000269" key="7">
    <source>
    </source>
</evidence>
<evidence type="ECO:0000269" key="8">
    <source>
    </source>
</evidence>
<evidence type="ECO:0000269" key="9">
    <source>
    </source>
</evidence>
<evidence type="ECO:0000269" key="10">
    <source>
    </source>
</evidence>
<evidence type="ECO:0000269" key="11">
    <source>
    </source>
</evidence>
<evidence type="ECO:0000303" key="12">
    <source>
    </source>
</evidence>
<evidence type="ECO:0000303" key="13">
    <source>
    </source>
</evidence>
<evidence type="ECO:0000303" key="14">
    <source>
    </source>
</evidence>
<evidence type="ECO:0000303" key="15">
    <source>
    </source>
</evidence>
<evidence type="ECO:0000303" key="16">
    <source>
    </source>
</evidence>
<evidence type="ECO:0000303" key="17">
    <source>
    </source>
</evidence>
<evidence type="ECO:0000305" key="18"/>
<evidence type="ECO:0007744" key="19">
    <source>
    </source>
</evidence>
<evidence type="ECO:0007744" key="20">
    <source>
    </source>
</evidence>
<evidence type="ECO:0007744" key="21">
    <source>
    </source>
</evidence>
<evidence type="ECO:0007744" key="22">
    <source>
    </source>
</evidence>
<evidence type="ECO:0007744" key="23">
    <source>
    </source>
</evidence>
<evidence type="ECO:0007744" key="24">
    <source>
    </source>
</evidence>
<evidence type="ECO:0007744" key="25">
    <source>
    </source>
</evidence>
<gene>
    <name type="primary">TACC2</name>
</gene>
<keyword id="KW-0025">Alternative splicing</keyword>
<keyword id="KW-0175">Coiled coil</keyword>
<keyword id="KW-0963">Cytoplasm</keyword>
<keyword id="KW-0206">Cytoskeleton</keyword>
<keyword id="KW-0539">Nucleus</keyword>
<keyword id="KW-0597">Phosphoprotein</keyword>
<keyword id="KW-1267">Proteomics identification</keyword>
<keyword id="KW-1185">Reference proteome</keyword>
<proteinExistence type="evidence at protein level"/>
<reference key="1">
    <citation type="journal article" date="2000" name="Mol. Biol. Cell">
        <title>AZU-1: a candidate breast tumor suppressor and biomarker for tumor progression.</title>
        <authorList>
            <person name="Chen H.-M."/>
            <person name="Schmeichel K.L."/>
            <person name="Mian I.S."/>
            <person name="Lelievre S."/>
            <person name="Petersen O.W."/>
            <person name="Bissell M.J."/>
        </authorList>
    </citation>
    <scope>NUCLEOTIDE SEQUENCE [MRNA] (ISOFORM 2)</scope>
    <scope>SUBCELLULAR LOCATION</scope>
    <scope>FUNCTION</scope>
</reference>
<reference key="2">
    <citation type="journal article" date="2000" name="Proc. Natl. Acad. Sci. U.S.A.">
        <title>The TACC domain identifies a family of centrosomal proteins that can interact with microtubules.</title>
        <authorList>
            <person name="Gergely F."/>
            <person name="Karlsson C."/>
            <person name="Still I.H."/>
            <person name="Cowell J.K."/>
            <person name="Kilmartin J."/>
            <person name="Raff J.W."/>
        </authorList>
    </citation>
    <scope>NUCLEOTIDE SEQUENCE [MRNA] (ISOFORM 1)</scope>
    <source>
        <tissue>Brain</tissue>
        <tissue>Fetal brain</tissue>
        <tissue>Skeletal muscle</tissue>
    </source>
</reference>
<reference key="3">
    <citation type="journal article" date="2003" name="Genomics">
        <title>Molecular cloning, genomic structure and interactions of the putative breast tumor suppressor TACC2.</title>
        <authorList>
            <person name="Lauffart B."/>
            <person name="Gangisetty O."/>
            <person name="Still I.H."/>
        </authorList>
    </citation>
    <scope>NUCLEOTIDE SEQUENCE [MRNA] (ISOFORMS 4 AND 5)</scope>
    <scope>TISSUE SPECIFICITY</scope>
    <scope>DEVELOPMENTAL STAGE</scope>
    <scope>INTERACTION WITH YEATS4</scope>
    <scope>VARIANTS PHE-830; ARG-1103 AND LYS-2900</scope>
</reference>
<reference key="4">
    <citation type="journal article" date="2004" name="Nature">
        <title>The DNA sequence and comparative analysis of human chromosome 10.</title>
        <authorList>
            <person name="Deloukas P."/>
            <person name="Earthrowl M.E."/>
            <person name="Grafham D.V."/>
            <person name="Rubenfield M."/>
            <person name="French L."/>
            <person name="Steward C.A."/>
            <person name="Sims S.K."/>
            <person name="Jones M.C."/>
            <person name="Searle S."/>
            <person name="Scott C."/>
            <person name="Howe K."/>
            <person name="Hunt S.E."/>
            <person name="Andrews T.D."/>
            <person name="Gilbert J.G.R."/>
            <person name="Swarbreck D."/>
            <person name="Ashurst J.L."/>
            <person name="Taylor A."/>
            <person name="Battles J."/>
            <person name="Bird C.P."/>
            <person name="Ainscough R."/>
            <person name="Almeida J.P."/>
            <person name="Ashwell R.I.S."/>
            <person name="Ambrose K.D."/>
            <person name="Babbage A.K."/>
            <person name="Bagguley C.L."/>
            <person name="Bailey J."/>
            <person name="Banerjee R."/>
            <person name="Bates K."/>
            <person name="Beasley H."/>
            <person name="Bray-Allen S."/>
            <person name="Brown A.J."/>
            <person name="Brown J.Y."/>
            <person name="Burford D.C."/>
            <person name="Burrill W."/>
            <person name="Burton J."/>
            <person name="Cahill P."/>
            <person name="Camire D."/>
            <person name="Carter N.P."/>
            <person name="Chapman J.C."/>
            <person name="Clark S.Y."/>
            <person name="Clarke G."/>
            <person name="Clee C.M."/>
            <person name="Clegg S."/>
            <person name="Corby N."/>
            <person name="Coulson A."/>
            <person name="Dhami P."/>
            <person name="Dutta I."/>
            <person name="Dunn M."/>
            <person name="Faulkner L."/>
            <person name="Frankish A."/>
            <person name="Frankland J.A."/>
            <person name="Garner P."/>
            <person name="Garnett J."/>
            <person name="Gribble S."/>
            <person name="Griffiths C."/>
            <person name="Grocock R."/>
            <person name="Gustafson E."/>
            <person name="Hammond S."/>
            <person name="Harley J.L."/>
            <person name="Hart E."/>
            <person name="Heath P.D."/>
            <person name="Ho T.P."/>
            <person name="Hopkins B."/>
            <person name="Horne J."/>
            <person name="Howden P.J."/>
            <person name="Huckle E."/>
            <person name="Hynds C."/>
            <person name="Johnson C."/>
            <person name="Johnson D."/>
            <person name="Kana A."/>
            <person name="Kay M."/>
            <person name="Kimberley A.M."/>
            <person name="Kershaw J.K."/>
            <person name="Kokkinaki M."/>
            <person name="Laird G.K."/>
            <person name="Lawlor S."/>
            <person name="Lee H.M."/>
            <person name="Leongamornlert D.A."/>
            <person name="Laird G."/>
            <person name="Lloyd C."/>
            <person name="Lloyd D.M."/>
            <person name="Loveland J."/>
            <person name="Lovell J."/>
            <person name="McLaren S."/>
            <person name="McLay K.E."/>
            <person name="McMurray A."/>
            <person name="Mashreghi-Mohammadi M."/>
            <person name="Matthews L."/>
            <person name="Milne S."/>
            <person name="Nickerson T."/>
            <person name="Nguyen M."/>
            <person name="Overton-Larty E."/>
            <person name="Palmer S.A."/>
            <person name="Pearce A.V."/>
            <person name="Peck A.I."/>
            <person name="Pelan S."/>
            <person name="Phillimore B."/>
            <person name="Porter K."/>
            <person name="Rice C.M."/>
            <person name="Rogosin A."/>
            <person name="Ross M.T."/>
            <person name="Sarafidou T."/>
            <person name="Sehra H.K."/>
            <person name="Shownkeen R."/>
            <person name="Skuce C.D."/>
            <person name="Smith M."/>
            <person name="Standring L."/>
            <person name="Sycamore N."/>
            <person name="Tester J."/>
            <person name="Thorpe A."/>
            <person name="Torcasso W."/>
            <person name="Tracey A."/>
            <person name="Tromans A."/>
            <person name="Tsolas J."/>
            <person name="Wall M."/>
            <person name="Walsh J."/>
            <person name="Wang H."/>
            <person name="Weinstock K."/>
            <person name="West A.P."/>
            <person name="Willey D.L."/>
            <person name="Whitehead S.L."/>
            <person name="Wilming L."/>
            <person name="Wray P.W."/>
            <person name="Young L."/>
            <person name="Chen Y."/>
            <person name="Lovering R.C."/>
            <person name="Moschonas N.K."/>
            <person name="Siebert R."/>
            <person name="Fechtel K."/>
            <person name="Bentley D."/>
            <person name="Durbin R.M."/>
            <person name="Hubbard T."/>
            <person name="Doucette-Stamm L."/>
            <person name="Beck S."/>
            <person name="Smith D.R."/>
            <person name="Rogers J."/>
        </authorList>
    </citation>
    <scope>NUCLEOTIDE SEQUENCE [LARGE SCALE GENOMIC DNA]</scope>
</reference>
<reference key="5">
    <citation type="journal article" date="2004" name="Genome Res.">
        <title>The status, quality, and expansion of the NIH full-length cDNA project: the Mammalian Gene Collection (MGC).</title>
        <authorList>
            <consortium name="The MGC Project Team"/>
        </authorList>
    </citation>
    <scope>NUCLEOTIDE SEQUENCE [LARGE SCALE MRNA] (ISOFORM 6)</scope>
    <source>
        <tissue>Placenta</tissue>
        <tissue>Testis</tissue>
    </source>
</reference>
<reference key="6">
    <citation type="journal article" date="2001" name="Cytokine">
        <title>Cloning and structural characterization of ECTACC, a new member of the transforming acidic coiled coil (TACC) gene family: cDNA sequence and expression analysis in human microvascular endothelial cells.</title>
        <authorList>
            <person name="Pu J.J."/>
            <person name="Li C."/>
            <person name="Rodriguez M."/>
            <person name="Banerjee D."/>
        </authorList>
    </citation>
    <scope>NUCLEOTIDE SEQUENCE [MRNA] OF 1990-2948 (ISOFORM 3)</scope>
    <scope>TISSUE SPECIFICITY</scope>
    <source>
        <tissue>Endothelial cell</tissue>
    </source>
</reference>
<reference key="7">
    <citation type="journal article" date="2007" name="BMC Genomics">
        <title>The full-ORF clone resource of the German cDNA consortium.</title>
        <authorList>
            <person name="Bechtel S."/>
            <person name="Rosenfelder H."/>
            <person name="Duda A."/>
            <person name="Schmidt C.P."/>
            <person name="Ernst U."/>
            <person name="Wellenreuther R."/>
            <person name="Mehrle A."/>
            <person name="Schuster C."/>
            <person name="Bahr A."/>
            <person name="Bloecker H."/>
            <person name="Heubner D."/>
            <person name="Hoerlein A."/>
            <person name="Michel G."/>
            <person name="Wedler H."/>
            <person name="Koehrer K."/>
            <person name="Ottenwaelder B."/>
            <person name="Poustka A."/>
            <person name="Wiemann S."/>
            <person name="Schupp I."/>
        </authorList>
    </citation>
    <scope>NUCLEOTIDE SEQUENCE [LARGE SCALE MRNA] OF 2065-2948 (ISOFORM 3)</scope>
    <scope>VARIANT THR-2732</scope>
    <source>
        <tissue>Brain</tissue>
    </source>
</reference>
<reference key="8">
    <citation type="journal article" date="2004" name="FEBS Lett.">
        <title>TTK kinase is essential for the centrosomal localization of TACC2.</title>
        <authorList>
            <person name="Dou Z."/>
            <person name="Ding X."/>
            <person name="Zereshki A."/>
            <person name="Zhang Y."/>
            <person name="Zhang J."/>
            <person name="Wang F."/>
            <person name="Sun J."/>
            <person name="Huang H."/>
            <person name="Yao X."/>
        </authorList>
    </citation>
    <scope>PHOSPHORYLATION</scope>
    <scope>SUBCELLULAR LOCATION</scope>
</reference>
<reference key="9">
    <citation type="journal article" date="2004" name="Oncogene">
        <title>The transforming acidic coiled coil proteins interact with nuclear histone acetyltransferases.</title>
        <authorList>
            <person name="Gangisetty O."/>
            <person name="Lauffart B."/>
            <person name="Sondarva G.V."/>
            <person name="Chelsea D.M."/>
            <person name="Still I.H."/>
        </authorList>
    </citation>
    <scope>INTERACTION WITH GCN5L2 AND PCAF</scope>
    <scope>SUBCELLULAR LOCATION</scope>
</reference>
<reference key="10">
    <citation type="journal article" date="2006" name="Cell">
        <title>Global, in vivo, and site-specific phosphorylation dynamics in signaling networks.</title>
        <authorList>
            <person name="Olsen J.V."/>
            <person name="Blagoev B."/>
            <person name="Gnad F."/>
            <person name="Macek B."/>
            <person name="Kumar C."/>
            <person name="Mortensen P."/>
            <person name="Mann M."/>
        </authorList>
    </citation>
    <scope>PHOSPHORYLATION [LARGE SCALE ANALYSIS] AT SER-2317 AND SER-2321</scope>
    <scope>IDENTIFICATION BY MASS SPECTROMETRY [LARGE SCALE ANALYSIS]</scope>
    <source>
        <tissue>Cervix carcinoma</tissue>
    </source>
</reference>
<reference key="11">
    <citation type="journal article" date="2006" name="Nat. Biotechnol.">
        <title>A probability-based approach for high-throughput protein phosphorylation analysis and site localization.</title>
        <authorList>
            <person name="Beausoleil S.A."/>
            <person name="Villen J."/>
            <person name="Gerber S.A."/>
            <person name="Rush J."/>
            <person name="Gygi S.P."/>
        </authorList>
    </citation>
    <scope>PHOSPHORYLATION [LARGE SCALE ANALYSIS] AT SER-2256 AND SER-2512</scope>
    <scope>IDENTIFICATION BY MASS SPECTROMETRY [LARGE SCALE ANALYSIS]</scope>
    <source>
        <tissue>Cervix carcinoma</tissue>
    </source>
</reference>
<reference key="12">
    <citation type="journal article" date="2008" name="Proc. Natl. Acad. Sci. U.S.A.">
        <title>A quantitative atlas of mitotic phosphorylation.</title>
        <authorList>
            <person name="Dephoure N."/>
            <person name="Zhou C."/>
            <person name="Villen J."/>
            <person name="Beausoleil S.A."/>
            <person name="Bakalarski C.E."/>
            <person name="Elledge S.J."/>
            <person name="Gygi S.P."/>
        </authorList>
    </citation>
    <scope>PHOSPHORYLATION [LARGE SCALE ANALYSIS] AT SER-197; SER-201; SER-571; SER-575; SER-758; SER-962; SER-1025; SER-1267; SER-1313; SER-1562; SER-2072; THR-2246; SER-2256; SER-2317; SER-2321; SER-2359; SER-2389; SER-2394; SER-2403 AND SER-2512</scope>
    <scope>PHOSPHORYLATION [LARGE SCALE ANALYSIS] AT THR-325 (ISOFORM 2)</scope>
    <scope>PHOSPHORYLATION [LARGE SCALE ANALYSIS] AT THR-2625 (ISOFORM 3)</scope>
    <scope>IDENTIFICATION BY MASS SPECTROMETRY [LARGE SCALE ANALYSIS]</scope>
    <source>
        <tissue>Cervix carcinoma</tissue>
    </source>
</reference>
<reference key="13">
    <citation type="journal article" date="2010" name="Sci. Signal.">
        <title>Quantitative phosphoproteomics reveals widespread full phosphorylation site occupancy during mitosis.</title>
        <authorList>
            <person name="Olsen J.V."/>
            <person name="Vermeulen M."/>
            <person name="Santamaria A."/>
            <person name="Kumar C."/>
            <person name="Miller M.L."/>
            <person name="Jensen L.J."/>
            <person name="Gnad F."/>
            <person name="Cox J."/>
            <person name="Jensen T.S."/>
            <person name="Nigg E.A."/>
            <person name="Brunak S."/>
            <person name="Mann M."/>
        </authorList>
    </citation>
    <scope>PHOSPHORYLATION [LARGE SCALE ANALYSIS] AT SER-197; SER-201; SER-269; SER-493; SER-561; SER-2226; THR-2246; SER-2256; SER-2317; SER-2321; THR-2451; THR-2455; THR-2458; SER-2512 AND SER-2557</scope>
    <scope>IDENTIFICATION BY MASS SPECTROMETRY [LARGE SCALE ANALYSIS]</scope>
    <source>
        <tissue>Cervix carcinoma</tissue>
    </source>
</reference>
<reference key="14">
    <citation type="journal article" date="2011" name="BMC Syst. Biol.">
        <title>Initial characterization of the human central proteome.</title>
        <authorList>
            <person name="Burkard T.R."/>
            <person name="Planyavsky M."/>
            <person name="Kaupe I."/>
            <person name="Breitwieser F.P."/>
            <person name="Buerckstuemmer T."/>
            <person name="Bennett K.L."/>
            <person name="Superti-Furga G."/>
            <person name="Colinge J."/>
        </authorList>
    </citation>
    <scope>IDENTIFICATION BY MASS SPECTROMETRY [LARGE SCALE ANALYSIS]</scope>
</reference>
<reference key="15">
    <citation type="journal article" date="2011" name="Sci. Signal.">
        <title>System-wide temporal characterization of the proteome and phosphoproteome of human embryonic stem cell differentiation.</title>
        <authorList>
            <person name="Rigbolt K.T."/>
            <person name="Prokhorova T.A."/>
            <person name="Akimov V."/>
            <person name="Henningsen J."/>
            <person name="Johansen P.T."/>
            <person name="Kratchmarova I."/>
            <person name="Kassem M."/>
            <person name="Mann M."/>
            <person name="Olsen J.V."/>
            <person name="Blagoev B."/>
        </authorList>
    </citation>
    <scope>PHOSPHORYLATION [LARGE SCALE ANALYSIS] AT SER-2072; SER-2256; SER-2317 AND SER-2321</scope>
    <scope>IDENTIFICATION BY MASS SPECTROMETRY [LARGE SCALE ANALYSIS]</scope>
</reference>
<reference key="16">
    <citation type="journal article" date="2013" name="J. Proteome Res.">
        <title>Toward a comprehensive characterization of a human cancer cell phosphoproteome.</title>
        <authorList>
            <person name="Zhou H."/>
            <person name="Di Palma S."/>
            <person name="Preisinger C."/>
            <person name="Peng M."/>
            <person name="Polat A.N."/>
            <person name="Heck A.J."/>
            <person name="Mohammed S."/>
        </authorList>
    </citation>
    <scope>PHOSPHORYLATION [LARGE SCALE ANALYSIS] AT SER-2256; SER-2317; THR-2430; SER-2512; SER-2534 AND SER-2569</scope>
    <scope>IDENTIFICATION BY MASS SPECTROMETRY [LARGE SCALE ANALYSIS]</scope>
    <source>
        <tissue>Cervix carcinoma</tissue>
    </source>
</reference>
<reference key="17">
    <citation type="journal article" date="2014" name="J. Proteomics">
        <title>An enzyme assisted RP-RPLC approach for in-depth analysis of human liver phosphoproteome.</title>
        <authorList>
            <person name="Bian Y."/>
            <person name="Song C."/>
            <person name="Cheng K."/>
            <person name="Dong M."/>
            <person name="Wang F."/>
            <person name="Huang J."/>
            <person name="Sun D."/>
            <person name="Wang L."/>
            <person name="Ye M."/>
            <person name="Zou H."/>
        </authorList>
    </citation>
    <scope>PHOSPHORYLATION [LARGE SCALE ANALYSIS] AT SER-2072; SER-2226 AND SER-2317</scope>
    <scope>IDENTIFICATION BY MASS SPECTROMETRY [LARGE SCALE ANALYSIS]</scope>
    <source>
        <tissue>Liver</tissue>
    </source>
</reference>
<reference key="18">
    <citation type="journal article" date="2006" name="Science">
        <title>The consensus coding sequences of human breast and colorectal cancers.</title>
        <authorList>
            <person name="Sjoeblom T."/>
            <person name="Jones S."/>
            <person name="Wood L.D."/>
            <person name="Parsons D.W."/>
            <person name="Lin J."/>
            <person name="Barber T.D."/>
            <person name="Mandelker D."/>
            <person name="Leary R.J."/>
            <person name="Ptak J."/>
            <person name="Silliman N."/>
            <person name="Szabo S."/>
            <person name="Buckhaults P."/>
            <person name="Farrell C."/>
            <person name="Meeh P."/>
            <person name="Markowitz S.D."/>
            <person name="Willis J."/>
            <person name="Dawson D."/>
            <person name="Willson J.K.V."/>
            <person name="Gazdar A.F."/>
            <person name="Hartigan J."/>
            <person name="Wu L."/>
            <person name="Liu C."/>
            <person name="Parmigiani G."/>
            <person name="Park B.H."/>
            <person name="Bachman K.E."/>
            <person name="Papadopoulos N."/>
            <person name="Vogelstein B."/>
            <person name="Kinzler K.W."/>
            <person name="Velculescu V.E."/>
        </authorList>
    </citation>
    <scope>VARIANTS [LARGE SCALE ANALYSIS] VAL-798 AND SER-1347</scope>
</reference>